<keyword id="KW-1185">Reference proteome</keyword>
<keyword id="KW-0687">Ribonucleoprotein</keyword>
<keyword id="KW-0689">Ribosomal protein</keyword>
<accession>Q9CJ14</accession>
<sequence length="64" mass="7173">MSKECYFTGRKTVSSNNRSHAMNQTKRVVKPNLQKVTILENGELKTVWASAKALKKLPAGVERV</sequence>
<organism>
    <name type="scientific">Lactococcus lactis subsp. lactis (strain IL1403)</name>
    <name type="common">Streptococcus lactis</name>
    <dbReference type="NCBI Taxonomy" id="272623"/>
    <lineage>
        <taxon>Bacteria</taxon>
        <taxon>Bacillati</taxon>
        <taxon>Bacillota</taxon>
        <taxon>Bacilli</taxon>
        <taxon>Lactobacillales</taxon>
        <taxon>Streptococcaceae</taxon>
        <taxon>Lactococcus</taxon>
    </lineage>
</organism>
<protein>
    <recommendedName>
        <fullName evidence="1">Large ribosomal subunit protein bL28</fullName>
    </recommendedName>
    <alternativeName>
        <fullName evidence="3">50S ribosomal protein L28</fullName>
    </alternativeName>
</protein>
<dbReference type="EMBL" id="AE005176">
    <property type="protein sequence ID" value="AAK04290.1"/>
    <property type="molecule type" value="Genomic_DNA"/>
</dbReference>
<dbReference type="PIR" id="H86648">
    <property type="entry name" value="H86648"/>
</dbReference>
<dbReference type="RefSeq" id="NP_266348.1">
    <property type="nucleotide sequence ID" value="NC_002662.1"/>
</dbReference>
<dbReference type="RefSeq" id="WP_003129776.1">
    <property type="nucleotide sequence ID" value="NC_002662.1"/>
</dbReference>
<dbReference type="SMR" id="Q9CJ14"/>
<dbReference type="PaxDb" id="272623-L0422"/>
<dbReference type="EnsemblBacteria" id="AAK04290">
    <property type="protein sequence ID" value="AAK04290"/>
    <property type="gene ID" value="L0422"/>
</dbReference>
<dbReference type="GeneID" id="89632332"/>
<dbReference type="KEGG" id="lla:L0422"/>
<dbReference type="PATRIC" id="fig|272623.7.peg.213"/>
<dbReference type="eggNOG" id="COG0227">
    <property type="taxonomic scope" value="Bacteria"/>
</dbReference>
<dbReference type="HOGENOM" id="CLU_064548_7_1_9"/>
<dbReference type="OrthoDB" id="9805609at2"/>
<dbReference type="Proteomes" id="UP000002196">
    <property type="component" value="Chromosome"/>
</dbReference>
<dbReference type="GO" id="GO:1990904">
    <property type="term" value="C:ribonucleoprotein complex"/>
    <property type="evidence" value="ECO:0007669"/>
    <property type="project" value="UniProtKB-KW"/>
</dbReference>
<dbReference type="GO" id="GO:0005840">
    <property type="term" value="C:ribosome"/>
    <property type="evidence" value="ECO:0007669"/>
    <property type="project" value="UniProtKB-KW"/>
</dbReference>
<dbReference type="GO" id="GO:0003735">
    <property type="term" value="F:structural constituent of ribosome"/>
    <property type="evidence" value="ECO:0007669"/>
    <property type="project" value="InterPro"/>
</dbReference>
<dbReference type="GO" id="GO:0006412">
    <property type="term" value="P:translation"/>
    <property type="evidence" value="ECO:0007669"/>
    <property type="project" value="UniProtKB-UniRule"/>
</dbReference>
<dbReference type="Gene3D" id="2.30.170.40">
    <property type="entry name" value="Ribosomal protein L28/L24"/>
    <property type="match status" value="1"/>
</dbReference>
<dbReference type="HAMAP" id="MF_00373">
    <property type="entry name" value="Ribosomal_bL28"/>
    <property type="match status" value="1"/>
</dbReference>
<dbReference type="InterPro" id="IPR050096">
    <property type="entry name" value="Bacterial_rp_bL28"/>
</dbReference>
<dbReference type="InterPro" id="IPR026569">
    <property type="entry name" value="Ribosomal_bL28"/>
</dbReference>
<dbReference type="InterPro" id="IPR034704">
    <property type="entry name" value="Ribosomal_bL28/bL31-like_sf"/>
</dbReference>
<dbReference type="InterPro" id="IPR001383">
    <property type="entry name" value="Ribosomal_bL28_bact-type"/>
</dbReference>
<dbReference type="InterPro" id="IPR037147">
    <property type="entry name" value="Ribosomal_bL28_sf"/>
</dbReference>
<dbReference type="NCBIfam" id="TIGR00009">
    <property type="entry name" value="L28"/>
    <property type="match status" value="1"/>
</dbReference>
<dbReference type="PANTHER" id="PTHR39080">
    <property type="entry name" value="50S RIBOSOMAL PROTEIN L28"/>
    <property type="match status" value="1"/>
</dbReference>
<dbReference type="PANTHER" id="PTHR39080:SF1">
    <property type="entry name" value="LARGE RIBOSOMAL SUBUNIT PROTEIN BL28A"/>
    <property type="match status" value="1"/>
</dbReference>
<dbReference type="Pfam" id="PF00830">
    <property type="entry name" value="Ribosomal_L28"/>
    <property type="match status" value="1"/>
</dbReference>
<dbReference type="SUPFAM" id="SSF143800">
    <property type="entry name" value="L28p-like"/>
    <property type="match status" value="1"/>
</dbReference>
<proteinExistence type="inferred from homology"/>
<name>RL28_LACLA</name>
<reference key="1">
    <citation type="journal article" date="2001" name="Genome Res.">
        <title>The complete genome sequence of the lactic acid bacterium Lactococcus lactis ssp. lactis IL1403.</title>
        <authorList>
            <person name="Bolotin A."/>
            <person name="Wincker P."/>
            <person name="Mauger S."/>
            <person name="Jaillon O."/>
            <person name="Malarme K."/>
            <person name="Weissenbach J."/>
            <person name="Ehrlich S.D."/>
            <person name="Sorokin A."/>
        </authorList>
    </citation>
    <scope>NUCLEOTIDE SEQUENCE [LARGE SCALE GENOMIC DNA]</scope>
    <source>
        <strain>IL1403</strain>
    </source>
</reference>
<comment type="similarity">
    <text evidence="1">Belongs to the bacterial ribosomal protein bL28 family.</text>
</comment>
<evidence type="ECO:0000255" key="1">
    <source>
        <dbReference type="HAMAP-Rule" id="MF_00373"/>
    </source>
</evidence>
<evidence type="ECO:0000256" key="2">
    <source>
        <dbReference type="SAM" id="MobiDB-lite"/>
    </source>
</evidence>
<evidence type="ECO:0000305" key="3"/>
<gene>
    <name evidence="1" type="primary">rpmB</name>
    <name type="ordered locus">LL0192</name>
    <name type="ORF">L0422</name>
</gene>
<feature type="chain" id="PRO_0000178487" description="Large ribosomal subunit protein bL28">
    <location>
        <begin position="1"/>
        <end position="64"/>
    </location>
</feature>
<feature type="region of interest" description="Disordered" evidence="2">
    <location>
        <begin position="1"/>
        <end position="23"/>
    </location>
</feature>
<feature type="compositionally biased region" description="Polar residues" evidence="2">
    <location>
        <begin position="11"/>
        <end position="23"/>
    </location>
</feature>